<evidence type="ECO:0000250" key="1">
    <source>
        <dbReference type="UniProtKB" id="P04896"/>
    </source>
</evidence>
<evidence type="ECO:0000250" key="2">
    <source>
        <dbReference type="UniProtKB" id="P63092"/>
    </source>
</evidence>
<evidence type="ECO:0000250" key="3">
    <source>
        <dbReference type="UniProtKB" id="P63094"/>
    </source>
</evidence>
<evidence type="ECO:0000255" key="4">
    <source>
        <dbReference type="PROSITE-ProRule" id="PRU01230"/>
    </source>
</evidence>
<evidence type="ECO:0000256" key="5">
    <source>
        <dbReference type="SAM" id="MobiDB-lite"/>
    </source>
</evidence>
<evidence type="ECO:0000269" key="6">
    <source>
    </source>
</evidence>
<evidence type="ECO:0000269" key="7">
    <source>
    </source>
</evidence>
<evidence type="ECO:0000269" key="8">
    <source>
    </source>
</evidence>
<evidence type="ECO:0000303" key="9">
    <source>
    </source>
</evidence>
<evidence type="ECO:0000303" key="10">
    <source ref="4"/>
</evidence>
<evidence type="ECO:0000305" key="11"/>
<evidence type="ECO:0007744" key="12">
    <source>
        <dbReference type="PDB" id="8UHB"/>
    </source>
</evidence>
<evidence type="ECO:0007744" key="13">
    <source>
    </source>
</evidence>
<evidence type="ECO:0007829" key="14">
    <source>
        <dbReference type="PDB" id="8UHB"/>
    </source>
</evidence>
<gene>
    <name type="primary">Gnas</name>
    <name type="synonym">Gnas1</name>
</gene>
<name>GNAS2_RAT</name>
<comment type="function">
    <text evidence="2">Guanine nucleotide-binding proteins (G proteins) function as transducers in numerous signaling pathways controlled by G protein-coupled receptors (GPCRs). The alpha chain contains the guanine nucleotide binding site and alternates between an active, GTP-bound state and an inactive, GDP-bound state. Signaling by an activated GPCR promotes GDP release and GTP binding. The alpha subunit has a low GTPase activity that converts bound GTP to GDP, thereby terminating the signal. Both GDP release and GTP hydrolysis are modulated by numerous regulatory proteins. Signaling involves the activation of adenylyl cyclases, resulting in increased levels of the signaling molecule cAMP. Functions downstream of beta-adrenergic receptors. Stimulates the Ras signaling pathway via RAPGEF2.</text>
</comment>
<comment type="catalytic activity">
    <reaction evidence="2">
        <text>GTP + H2O = GDP + phosphate + H(+)</text>
        <dbReference type="Rhea" id="RHEA:19669"/>
        <dbReference type="ChEBI" id="CHEBI:15377"/>
        <dbReference type="ChEBI" id="CHEBI:15378"/>
        <dbReference type="ChEBI" id="CHEBI:37565"/>
        <dbReference type="ChEBI" id="CHEBI:43474"/>
        <dbReference type="ChEBI" id="CHEBI:58189"/>
    </reaction>
    <physiologicalReaction direction="left-to-right" evidence="2">
        <dbReference type="Rhea" id="RHEA:19670"/>
    </physiologicalReaction>
</comment>
<comment type="subunit">
    <text evidence="1 2 6">Heterotrimeric G proteins are composed of 3 units; alpha, beta and gamma (PubMed:38168118). The alpha chain contains the guanine nucleotide binding site (By similarity). Component of the TAS2R14-GNAS2 complex, consisting of TAS2R14, GNAS2, GNB1 and GNG2; within the complex interacts with TAS2R14; this complex plays a role in the perception of bitterness (By similarity). Interacts with CRY1; the interaction may block GPCR-mediated regulation of cAMP concentrations. Interacts with ADCY6 and stimulates its adenylyl cyclase activity (By similarity). Interacts with ADCY2 and ADCY5 (By similarity). Stimulates the ADCY5 adenylyl cyclase activity (By similarity). Interacts (GDP-bound form) with RIC8B; promoting GNAS folding and association with the plasma membrane (By similarity). Interaction with SASH1 (By similarity). Interacts with GASL2L2 (By similarity).</text>
</comment>
<comment type="subcellular location">
    <subcellularLocation>
        <location evidence="3">Cell membrane</location>
        <topology evidence="3">Lipid-anchor</topology>
    </subcellularLocation>
</comment>
<comment type="alternative products">
    <event type="alternative splicing"/>
    <isoform>
        <id>P63095-1</id>
        <name>Gnas-1</name>
        <sequence type="displayed"/>
    </isoform>
    <isoform>
        <id>P63095-2</id>
        <name>Gnas-2</name>
        <sequence type="described" ref="VSP_021154"/>
    </isoform>
    <isoform>
        <id>P63095-3</id>
        <name>Gnas-3</name>
        <name>GsaN1</name>
        <sequence type="described" ref="VSP_021155 VSP_021156"/>
    </isoform>
    <isoform>
        <id>Q63803-1</id>
        <name>XLas-1</name>
        <sequence type="external"/>
    </isoform>
    <isoform>
        <id>Q792G6-1</id>
        <name>Nesp55</name>
        <sequence type="external"/>
    </isoform>
</comment>
<comment type="tissue specificity">
    <text evidence="8">Isoform Gnas-3 is abundant in brain with intermediate levels in skeletal muscle and very low levels in other tissues.</text>
</comment>
<comment type="miscellaneous">
    <text>This protein is produced by a bicistronic gene which also produces the ALEX protein from an overlapping reading frame.</text>
</comment>
<comment type="miscellaneous">
    <text>The GNAS locus is imprinted in a complex manner, giving rise to distinct paternally, maternally and biallelically expressed proteins. The XLas isoforms are paternally derived, the Gnas isoforms are biallelically derived and the Nesp55 isoforms are maternally derived.</text>
</comment>
<comment type="similarity">
    <text evidence="11">Belongs to the G-alpha family. G(s) subfamily.</text>
</comment>
<keyword id="KW-0002">3D-structure</keyword>
<keyword id="KW-0025">Alternative splicing</keyword>
<keyword id="KW-1003">Cell membrane</keyword>
<keyword id="KW-0342">GTP-binding</keyword>
<keyword id="KW-0378">Hydrolase</keyword>
<keyword id="KW-1017">Isopeptide bond</keyword>
<keyword id="KW-0449">Lipoprotein</keyword>
<keyword id="KW-0460">Magnesium</keyword>
<keyword id="KW-0472">Membrane</keyword>
<keyword id="KW-0479">Metal-binding</keyword>
<keyword id="KW-0547">Nucleotide-binding</keyword>
<keyword id="KW-0564">Palmitate</keyword>
<keyword id="KW-0597">Phosphoprotein</keyword>
<keyword id="KW-1185">Reference proteome</keyword>
<keyword id="KW-0807">Transducer</keyword>
<keyword id="KW-0832">Ubl conjugation</keyword>
<feature type="initiator methionine" description="Removed" evidence="1">
    <location>
        <position position="1"/>
    </location>
</feature>
<feature type="chain" id="PRO_0000203725" description="Guanine nucleotide-binding protein G(s) subunit alpha isoforms short">
    <location>
        <begin position="2"/>
        <end position="394"/>
    </location>
</feature>
<feature type="domain" description="G-alpha" evidence="4">
    <location>
        <begin position="39"/>
        <end position="394"/>
    </location>
</feature>
<feature type="region of interest" description="Disordered" evidence="5">
    <location>
        <begin position="1"/>
        <end position="23"/>
    </location>
</feature>
<feature type="region of interest" description="G1 motif" evidence="4">
    <location>
        <begin position="42"/>
        <end position="55"/>
    </location>
</feature>
<feature type="region of interest" description="Disordered" evidence="5">
    <location>
        <begin position="68"/>
        <end position="90"/>
    </location>
</feature>
<feature type="region of interest" description="G2 motif" evidence="4">
    <location>
        <begin position="196"/>
        <end position="204"/>
    </location>
</feature>
<feature type="region of interest" description="G3 motif" evidence="4">
    <location>
        <begin position="219"/>
        <end position="228"/>
    </location>
</feature>
<feature type="region of interest" description="G4 motif" evidence="4">
    <location>
        <begin position="288"/>
        <end position="295"/>
    </location>
</feature>
<feature type="region of interest" description="G5 motif" evidence="4">
    <location>
        <begin position="364"/>
        <end position="369"/>
    </location>
</feature>
<feature type="compositionally biased region" description="Basic and acidic residues" evidence="5">
    <location>
        <begin position="8"/>
        <end position="23"/>
    </location>
</feature>
<feature type="binding site" evidence="1">
    <location>
        <begin position="47"/>
        <end position="55"/>
    </location>
    <ligand>
        <name>GTP</name>
        <dbReference type="ChEBI" id="CHEBI:37565"/>
    </ligand>
</feature>
<feature type="binding site" evidence="1">
    <location>
        <position position="54"/>
    </location>
    <ligand>
        <name>Mg(2+)</name>
        <dbReference type="ChEBI" id="CHEBI:18420"/>
    </ligand>
</feature>
<feature type="binding site" evidence="1">
    <location>
        <begin position="197"/>
        <end position="204"/>
    </location>
    <ligand>
        <name>GTP</name>
        <dbReference type="ChEBI" id="CHEBI:37565"/>
    </ligand>
</feature>
<feature type="binding site" evidence="1">
    <location>
        <position position="204"/>
    </location>
    <ligand>
        <name>Mg(2+)</name>
        <dbReference type="ChEBI" id="CHEBI:18420"/>
    </ligand>
</feature>
<feature type="binding site" evidence="1">
    <location>
        <begin position="223"/>
        <end position="227"/>
    </location>
    <ligand>
        <name>GTP</name>
        <dbReference type="ChEBI" id="CHEBI:37565"/>
    </ligand>
</feature>
<feature type="binding site" evidence="1">
    <location>
        <begin position="292"/>
        <end position="295"/>
    </location>
    <ligand>
        <name>GTP</name>
        <dbReference type="ChEBI" id="CHEBI:37565"/>
    </ligand>
</feature>
<feature type="binding site" evidence="1">
    <location>
        <position position="366"/>
    </location>
    <ligand>
        <name>GTP</name>
        <dbReference type="ChEBI" id="CHEBI:37565"/>
    </ligand>
</feature>
<feature type="modified residue" description="Phosphoserine" evidence="13">
    <location>
        <position position="352"/>
    </location>
</feature>
<feature type="lipid moiety-binding region" description="N-palmitoyl glycine" evidence="1">
    <location>
        <position position="2"/>
    </location>
</feature>
<feature type="lipid moiety-binding region" description="S-palmitoyl cysteine" evidence="7">
    <location>
        <position position="3"/>
    </location>
</feature>
<feature type="cross-link" description="Glycyl lysine isopeptide (Lys-Gly) (interchain with G-Cter in ubiquitin)" evidence="2">
    <location>
        <position position="300"/>
    </location>
</feature>
<feature type="splice variant" id="VSP_021154" description="In isoform Gnas-2." evidence="10">
    <original>MGCLGNSKTEDQRNEEKAQREANKKIEKQLQKDKQVYRATHRLLLL</original>
    <variation>MGDSVQILLVFMDK</variation>
    <location>
        <begin position="1"/>
        <end position="46"/>
    </location>
</feature>
<feature type="splice variant" id="VSP_021155" description="In isoform Gnas-3." evidence="9">
    <original>EKATK</original>
    <variation>VYYPH</variation>
    <location>
        <begin position="87"/>
        <end position="91"/>
    </location>
</feature>
<feature type="splice variant" id="VSP_021156" description="In isoform Gnas-3." evidence="9">
    <location>
        <begin position="92"/>
        <end position="394"/>
    </location>
</feature>
<feature type="mutagenesis site" description="Abolishes S-palmitoylation." evidence="7">
    <original>C</original>
    <variation>A</variation>
    <location>
        <position position="3"/>
    </location>
</feature>
<feature type="helix" evidence="14">
    <location>
        <begin position="11"/>
        <end position="37"/>
    </location>
</feature>
<feature type="strand" evidence="14">
    <location>
        <begin position="49"/>
        <end position="55"/>
    </location>
</feature>
<feature type="helix" evidence="14">
    <location>
        <begin position="56"/>
        <end position="59"/>
    </location>
</feature>
<feature type="strand" evidence="14">
    <location>
        <begin position="212"/>
        <end position="214"/>
    </location>
</feature>
<feature type="strand" evidence="14">
    <location>
        <begin position="217"/>
        <end position="219"/>
    </location>
</feature>
<feature type="turn" evidence="14">
    <location>
        <begin position="232"/>
        <end position="234"/>
    </location>
</feature>
<feature type="strand" evidence="14">
    <location>
        <begin position="239"/>
        <end position="242"/>
    </location>
</feature>
<feature type="strand" evidence="14">
    <location>
        <begin position="246"/>
        <end position="249"/>
    </location>
</feature>
<feature type="strand" evidence="14">
    <location>
        <begin position="265"/>
        <end position="269"/>
    </location>
</feature>
<feature type="helix" evidence="14">
    <location>
        <begin position="270"/>
        <end position="278"/>
    </location>
</feature>
<feature type="strand" evidence="14">
    <location>
        <begin position="280"/>
        <end position="284"/>
    </location>
</feature>
<feature type="strand" evidence="14">
    <location>
        <begin position="287"/>
        <end position="292"/>
    </location>
</feature>
<feature type="helix" evidence="14">
    <location>
        <begin position="294"/>
        <end position="302"/>
    </location>
</feature>
<feature type="turn" evidence="14">
    <location>
        <begin position="308"/>
        <end position="310"/>
    </location>
</feature>
<feature type="turn" evidence="14">
    <location>
        <begin position="332"/>
        <end position="334"/>
    </location>
</feature>
<feature type="helix" evidence="14">
    <location>
        <begin position="335"/>
        <end position="352"/>
    </location>
</feature>
<feature type="strand" evidence="14">
    <location>
        <begin position="359"/>
        <end position="362"/>
    </location>
</feature>
<feature type="helix" evidence="14">
    <location>
        <begin position="372"/>
        <end position="390"/>
    </location>
</feature>
<dbReference type="EC" id="3.6.5.-" evidence="2"/>
<dbReference type="EMBL" id="M12673">
    <property type="protein sequence ID" value="AAA41261.1"/>
    <property type="molecule type" value="mRNA"/>
</dbReference>
<dbReference type="EMBL" id="M17525">
    <property type="protein sequence ID" value="AAA40827.1"/>
    <property type="molecule type" value="mRNA"/>
</dbReference>
<dbReference type="EMBL" id="L10326">
    <property type="protein sequence ID" value="AAA41664.1"/>
    <property type="molecule type" value="mRNA"/>
</dbReference>
<dbReference type="EMBL" id="AF107844">
    <property type="protein sequence ID" value="AAD11802.1"/>
    <property type="molecule type" value="mRNA"/>
</dbReference>
<dbReference type="EMBL" id="DQ120475">
    <property type="protein sequence ID" value="AAZ23814.1"/>
    <property type="molecule type" value="mRNA"/>
</dbReference>
<dbReference type="EMBL" id="DQ120476">
    <property type="protein sequence ID" value="AAZ23815.1"/>
    <property type="molecule type" value="mRNA"/>
</dbReference>
<dbReference type="EMBL" id="BC061967">
    <property type="protein sequence ID" value="AAH61967.1"/>
    <property type="molecule type" value="mRNA"/>
</dbReference>
<dbReference type="PIR" id="A27423">
    <property type="entry name" value="RGRTA2"/>
</dbReference>
<dbReference type="PIR" id="A46685">
    <property type="entry name" value="A46685"/>
</dbReference>
<dbReference type="RefSeq" id="NP_062005.1">
    <molecule id="P63095-1"/>
    <property type="nucleotide sequence ID" value="NM_019132.3"/>
</dbReference>
<dbReference type="PDB" id="8UHB">
    <property type="method" value="EM"/>
    <property type="resolution" value="3.35 A"/>
    <property type="chains" value="C=1-394"/>
</dbReference>
<dbReference type="PDBsum" id="8UHB"/>
<dbReference type="EMDB" id="EMD-39228"/>
<dbReference type="EMDB" id="EMD-42268"/>
<dbReference type="SMR" id="P63095"/>
<dbReference type="BioGRID" id="247005">
    <property type="interactions" value="8"/>
</dbReference>
<dbReference type="CORUM" id="P63095"/>
<dbReference type="IntAct" id="P63095">
    <property type="interactions" value="2"/>
</dbReference>
<dbReference type="MINT" id="P63095"/>
<dbReference type="iPTMnet" id="P63095"/>
<dbReference type="PhosphoSitePlus" id="P63095"/>
<dbReference type="SwissPalm" id="P63095"/>
<dbReference type="jPOST" id="P63095"/>
<dbReference type="Ensembl" id="ENSRNOT00000111199.1">
    <molecule id="P63095-1"/>
    <property type="protein sequence ID" value="ENSRNOP00000080642.1"/>
    <property type="gene ID" value="ENSRNOG00000047374.3"/>
</dbReference>
<dbReference type="GeneID" id="24896"/>
<dbReference type="AGR" id="RGD:2716"/>
<dbReference type="CTD" id="2778"/>
<dbReference type="RGD" id="2716">
    <property type="gene designation" value="Gnas"/>
</dbReference>
<dbReference type="GeneTree" id="ENSGT00940000156300"/>
<dbReference type="OMA" id="DHVAKCW"/>
<dbReference type="OrthoDB" id="9837901at2759"/>
<dbReference type="Proteomes" id="UP000002494">
    <property type="component" value="Chromosome 3"/>
</dbReference>
<dbReference type="GO" id="GO:0030142">
    <property type="term" value="C:COPI-coated Golgi to ER transport vesicle"/>
    <property type="evidence" value="ECO:0000314"/>
    <property type="project" value="RGD"/>
</dbReference>
<dbReference type="GO" id="GO:0005737">
    <property type="term" value="C:cytoplasm"/>
    <property type="evidence" value="ECO:0000266"/>
    <property type="project" value="RGD"/>
</dbReference>
<dbReference type="GO" id="GO:0005829">
    <property type="term" value="C:cytosol"/>
    <property type="evidence" value="ECO:0000314"/>
    <property type="project" value="BHF-UCL"/>
</dbReference>
<dbReference type="GO" id="GO:0030425">
    <property type="term" value="C:dendrite"/>
    <property type="evidence" value="ECO:0000266"/>
    <property type="project" value="RGD"/>
</dbReference>
<dbReference type="GO" id="GO:0005768">
    <property type="term" value="C:endosome"/>
    <property type="evidence" value="ECO:0000314"/>
    <property type="project" value="RGD"/>
</dbReference>
<dbReference type="GO" id="GO:0005834">
    <property type="term" value="C:heterotrimeric G-protein complex"/>
    <property type="evidence" value="ECO:0000314"/>
    <property type="project" value="BHF-UCL"/>
</dbReference>
<dbReference type="GO" id="GO:0016020">
    <property type="term" value="C:membrane"/>
    <property type="evidence" value="ECO:0000314"/>
    <property type="project" value="BHF-UCL"/>
</dbReference>
<dbReference type="GO" id="GO:0043025">
    <property type="term" value="C:neuronal cell body"/>
    <property type="evidence" value="ECO:0000314"/>
    <property type="project" value="RGD"/>
</dbReference>
<dbReference type="GO" id="GO:0005634">
    <property type="term" value="C:nucleus"/>
    <property type="evidence" value="ECO:0000266"/>
    <property type="project" value="RGD"/>
</dbReference>
<dbReference type="GO" id="GO:0048471">
    <property type="term" value="C:perinuclear region of cytoplasm"/>
    <property type="evidence" value="ECO:0000314"/>
    <property type="project" value="RGD"/>
</dbReference>
<dbReference type="GO" id="GO:0005886">
    <property type="term" value="C:plasma membrane"/>
    <property type="evidence" value="ECO:0000266"/>
    <property type="project" value="RGD"/>
</dbReference>
<dbReference type="GO" id="GO:0055037">
    <property type="term" value="C:recycling endosome"/>
    <property type="evidence" value="ECO:0000314"/>
    <property type="project" value="RGD"/>
</dbReference>
<dbReference type="GO" id="GO:0001726">
    <property type="term" value="C:ruffle"/>
    <property type="evidence" value="ECO:0000314"/>
    <property type="project" value="RGD"/>
</dbReference>
<dbReference type="GO" id="GO:0042383">
    <property type="term" value="C:sarcolemma"/>
    <property type="evidence" value="ECO:0000314"/>
    <property type="project" value="RGD"/>
</dbReference>
<dbReference type="GO" id="GO:0032588">
    <property type="term" value="C:trans-Golgi network membrane"/>
    <property type="evidence" value="ECO:0000266"/>
    <property type="project" value="RGD"/>
</dbReference>
<dbReference type="GO" id="GO:0010856">
    <property type="term" value="F:adenylate cyclase activator activity"/>
    <property type="evidence" value="ECO:0000250"/>
    <property type="project" value="UniProtKB"/>
</dbReference>
<dbReference type="GO" id="GO:0010854">
    <property type="term" value="F:adenylate cyclase regulator activity"/>
    <property type="evidence" value="ECO:0000266"/>
    <property type="project" value="RGD"/>
</dbReference>
<dbReference type="GO" id="GO:0047391">
    <property type="term" value="F:alkylglycerophosphoethanolamine phosphodiesterase activity"/>
    <property type="evidence" value="ECO:0000314"/>
    <property type="project" value="MGI"/>
</dbReference>
<dbReference type="GO" id="GO:0043014">
    <property type="term" value="F:alpha-tubulin binding"/>
    <property type="evidence" value="ECO:0000314"/>
    <property type="project" value="RGD"/>
</dbReference>
<dbReference type="GO" id="GO:0031698">
    <property type="term" value="F:beta-2 adrenergic receptor binding"/>
    <property type="evidence" value="ECO:0000353"/>
    <property type="project" value="RGD"/>
</dbReference>
<dbReference type="GO" id="GO:0051430">
    <property type="term" value="F:corticotropin-releasing hormone receptor 1 binding"/>
    <property type="evidence" value="ECO:0000353"/>
    <property type="project" value="RGD"/>
</dbReference>
<dbReference type="GO" id="GO:0031748">
    <property type="term" value="F:D1 dopamine receptor binding"/>
    <property type="evidence" value="ECO:0000353"/>
    <property type="project" value="RGD"/>
</dbReference>
<dbReference type="GO" id="GO:0003925">
    <property type="term" value="F:G protein activity"/>
    <property type="evidence" value="ECO:0000266"/>
    <property type="project" value="RGD"/>
</dbReference>
<dbReference type="GO" id="GO:0001965">
    <property type="term" value="F:G-protein alpha-subunit binding"/>
    <property type="evidence" value="ECO:0000353"/>
    <property type="project" value="RGD"/>
</dbReference>
<dbReference type="GO" id="GO:0031681">
    <property type="term" value="F:G-protein beta-subunit binding"/>
    <property type="evidence" value="ECO:0000314"/>
    <property type="project" value="RGD"/>
</dbReference>
<dbReference type="GO" id="GO:0031683">
    <property type="term" value="F:G-protein beta/gamma-subunit complex binding"/>
    <property type="evidence" value="ECO:0000318"/>
    <property type="project" value="GO_Central"/>
</dbReference>
<dbReference type="GO" id="GO:0005525">
    <property type="term" value="F:GTP binding"/>
    <property type="evidence" value="ECO:0000314"/>
    <property type="project" value="RGD"/>
</dbReference>
<dbReference type="GO" id="GO:0003924">
    <property type="term" value="F:GTPase activity"/>
    <property type="evidence" value="ECO:0000318"/>
    <property type="project" value="GO_Central"/>
</dbReference>
<dbReference type="GO" id="GO:0005159">
    <property type="term" value="F:insulin-like growth factor receptor binding"/>
    <property type="evidence" value="ECO:0000353"/>
    <property type="project" value="RGD"/>
</dbReference>
<dbReference type="GO" id="GO:0035255">
    <property type="term" value="F:ionotropic glutamate receptor binding"/>
    <property type="evidence" value="ECO:0000353"/>
    <property type="project" value="RGD"/>
</dbReference>
<dbReference type="GO" id="GO:0046872">
    <property type="term" value="F:metal ion binding"/>
    <property type="evidence" value="ECO:0007669"/>
    <property type="project" value="UniProtKB-KW"/>
</dbReference>
<dbReference type="GO" id="GO:0031852">
    <property type="term" value="F:mu-type opioid receptor binding"/>
    <property type="evidence" value="ECO:0000314"/>
    <property type="project" value="RGD"/>
</dbReference>
<dbReference type="GO" id="GO:0019904">
    <property type="term" value="F:protein domain specific binding"/>
    <property type="evidence" value="ECO:0000353"/>
    <property type="project" value="RGD"/>
</dbReference>
<dbReference type="GO" id="GO:0071880">
    <property type="term" value="P:adenylate cyclase-activating adrenergic receptor signaling pathway"/>
    <property type="evidence" value="ECO:0000250"/>
    <property type="project" value="UniProtKB"/>
</dbReference>
<dbReference type="GO" id="GO:0007191">
    <property type="term" value="P:adenylate cyclase-activating dopamine receptor signaling pathway"/>
    <property type="evidence" value="ECO:0000314"/>
    <property type="project" value="BHF-UCL"/>
</dbReference>
<dbReference type="GO" id="GO:0007189">
    <property type="term" value="P:adenylate cyclase-activating G protein-coupled receptor signaling pathway"/>
    <property type="evidence" value="ECO:0000314"/>
    <property type="project" value="RGD"/>
</dbReference>
<dbReference type="GO" id="GO:0007192">
    <property type="term" value="P:adenylate cyclase-activating serotonin receptor signaling pathway"/>
    <property type="evidence" value="ECO:0000266"/>
    <property type="project" value="RGD"/>
</dbReference>
<dbReference type="GO" id="GO:0060348">
    <property type="term" value="P:bone development"/>
    <property type="evidence" value="ECO:0000266"/>
    <property type="project" value="RGD"/>
</dbReference>
<dbReference type="GO" id="GO:0051216">
    <property type="term" value="P:cartilage development"/>
    <property type="evidence" value="ECO:0000266"/>
    <property type="project" value="RGD"/>
</dbReference>
<dbReference type="GO" id="GO:0071870">
    <property type="term" value="P:cellular response to catecholamine stimulus"/>
    <property type="evidence" value="ECO:0000314"/>
    <property type="project" value="BHF-UCL"/>
</dbReference>
<dbReference type="GO" id="GO:0071377">
    <property type="term" value="P:cellular response to glucagon stimulus"/>
    <property type="evidence" value="ECO:0000266"/>
    <property type="project" value="RGD"/>
</dbReference>
<dbReference type="GO" id="GO:0071380">
    <property type="term" value="P:cellular response to prostaglandin E stimulus"/>
    <property type="evidence" value="ECO:0000314"/>
    <property type="project" value="BHF-UCL"/>
</dbReference>
<dbReference type="GO" id="GO:0050890">
    <property type="term" value="P:cognition"/>
    <property type="evidence" value="ECO:0000266"/>
    <property type="project" value="RGD"/>
</dbReference>
<dbReference type="GO" id="GO:0048589">
    <property type="term" value="P:developmental growth"/>
    <property type="evidence" value="ECO:0000266"/>
    <property type="project" value="RGD"/>
</dbReference>
<dbReference type="GO" id="GO:0048701">
    <property type="term" value="P:embryonic cranial skeleton morphogenesis"/>
    <property type="evidence" value="ECO:0000266"/>
    <property type="project" value="RGD"/>
</dbReference>
<dbReference type="GO" id="GO:0035116">
    <property type="term" value="P:embryonic hindlimb morphogenesis"/>
    <property type="evidence" value="ECO:0000266"/>
    <property type="project" value="RGD"/>
</dbReference>
<dbReference type="GO" id="GO:0001958">
    <property type="term" value="P:endochondral ossification"/>
    <property type="evidence" value="ECO:0000266"/>
    <property type="project" value="RGD"/>
</dbReference>
<dbReference type="GO" id="GO:0006112">
    <property type="term" value="P:energy reserve metabolic process"/>
    <property type="evidence" value="ECO:0000266"/>
    <property type="project" value="RGD"/>
</dbReference>
<dbReference type="GO" id="GO:0007186">
    <property type="term" value="P:G protein-coupled receptor signaling pathway"/>
    <property type="evidence" value="ECO:0000315"/>
    <property type="project" value="RGD"/>
</dbReference>
<dbReference type="GO" id="GO:0071514">
    <property type="term" value="P:genomic imprinting"/>
    <property type="evidence" value="ECO:0000266"/>
    <property type="project" value="RGD"/>
</dbReference>
<dbReference type="GO" id="GO:0060789">
    <property type="term" value="P:hair follicle placode formation"/>
    <property type="evidence" value="ECO:0000266"/>
    <property type="project" value="RGD"/>
</dbReference>
<dbReference type="GO" id="GO:0035264">
    <property type="term" value="P:multicellular organism growth"/>
    <property type="evidence" value="ECO:0000266"/>
    <property type="project" value="RGD"/>
</dbReference>
<dbReference type="GO" id="GO:0045776">
    <property type="term" value="P:negative regulation of blood pressure"/>
    <property type="evidence" value="ECO:0000315"/>
    <property type="project" value="RGD"/>
</dbReference>
<dbReference type="GO" id="GO:0070527">
    <property type="term" value="P:platelet aggregation"/>
    <property type="evidence" value="ECO:0000266"/>
    <property type="project" value="RGD"/>
</dbReference>
<dbReference type="GO" id="GO:0008284">
    <property type="term" value="P:positive regulation of cell population proliferation"/>
    <property type="evidence" value="ECO:0000314"/>
    <property type="project" value="RGD"/>
</dbReference>
<dbReference type="GO" id="GO:0120162">
    <property type="term" value="P:positive regulation of cold-induced thermogenesis"/>
    <property type="evidence" value="ECO:0000250"/>
    <property type="project" value="YuBioLab"/>
</dbReference>
<dbReference type="GO" id="GO:0032024">
    <property type="term" value="P:positive regulation of insulin secretion"/>
    <property type="evidence" value="ECO:0000266"/>
    <property type="project" value="RGD"/>
</dbReference>
<dbReference type="GO" id="GO:0045669">
    <property type="term" value="P:positive regulation of osteoblast differentiation"/>
    <property type="evidence" value="ECO:0000266"/>
    <property type="project" value="RGD"/>
</dbReference>
<dbReference type="GO" id="GO:0045672">
    <property type="term" value="P:positive regulation of osteoclast differentiation"/>
    <property type="evidence" value="ECO:0000266"/>
    <property type="project" value="RGD"/>
</dbReference>
<dbReference type="GO" id="GO:0010765">
    <property type="term" value="P:positive regulation of sodium ion transport"/>
    <property type="evidence" value="ECO:0000315"/>
    <property type="project" value="RGD"/>
</dbReference>
<dbReference type="GO" id="GO:0040032">
    <property type="term" value="P:post-embryonic body morphogenesis"/>
    <property type="evidence" value="ECO:0000266"/>
    <property type="project" value="RGD"/>
</dbReference>
<dbReference type="GO" id="GO:0009791">
    <property type="term" value="P:post-embryonic development"/>
    <property type="evidence" value="ECO:0000266"/>
    <property type="project" value="RGD"/>
</dbReference>
<dbReference type="GO" id="GO:2000828">
    <property type="term" value="P:regulation of parathyroid hormone secretion"/>
    <property type="evidence" value="ECO:0000266"/>
    <property type="project" value="RGD"/>
</dbReference>
<dbReference type="GO" id="GO:0009966">
    <property type="term" value="P:regulation of signal transduction"/>
    <property type="evidence" value="ECO:0000266"/>
    <property type="project" value="RGD"/>
</dbReference>
<dbReference type="GO" id="GO:0006357">
    <property type="term" value="P:regulation of transcription by RNA polymerase II"/>
    <property type="evidence" value="ECO:0000315"/>
    <property type="project" value="RGD"/>
</dbReference>
<dbReference type="GO" id="GO:0071107">
    <property type="term" value="P:response to parathyroid hormone"/>
    <property type="evidence" value="ECO:0000266"/>
    <property type="project" value="RGD"/>
</dbReference>
<dbReference type="GO" id="GO:0034695">
    <property type="term" value="P:response to prostaglandin E"/>
    <property type="evidence" value="ECO:0000266"/>
    <property type="project" value="RGD"/>
</dbReference>
<dbReference type="GO" id="GO:0009410">
    <property type="term" value="P:response to xenobiotic stimulus"/>
    <property type="evidence" value="ECO:0000266"/>
    <property type="project" value="RGD"/>
</dbReference>
<dbReference type="GO" id="GO:0007606">
    <property type="term" value="P:sensory perception of chemical stimulus"/>
    <property type="evidence" value="ECO:0000318"/>
    <property type="project" value="GO_Central"/>
</dbReference>
<dbReference type="GO" id="GO:0001501">
    <property type="term" value="P:skeletal system development"/>
    <property type="evidence" value="ECO:0000266"/>
    <property type="project" value="RGD"/>
</dbReference>
<dbReference type="GO" id="GO:0043588">
    <property type="term" value="P:skin development"/>
    <property type="evidence" value="ECO:0000266"/>
    <property type="project" value="RGD"/>
</dbReference>
<dbReference type="GO" id="GO:0001894">
    <property type="term" value="P:tissue homeostasis"/>
    <property type="evidence" value="ECO:0000266"/>
    <property type="project" value="RGD"/>
</dbReference>
<dbReference type="CDD" id="cd00066">
    <property type="entry name" value="G-alpha"/>
    <property type="match status" value="1"/>
</dbReference>
<dbReference type="FunFam" id="1.10.400.10:FF:000003">
    <property type="entry name" value="Guanine nucleotide-binding protein G(S) subunit alpha"/>
    <property type="match status" value="1"/>
</dbReference>
<dbReference type="FunFam" id="3.40.50.300:FF:006178">
    <property type="entry name" value="Guanine nucleotide-binding protein G(s) subunit alpha isoforms short"/>
    <property type="match status" value="2"/>
</dbReference>
<dbReference type="Gene3D" id="1.10.400.10">
    <property type="entry name" value="GI Alpha 1, domain 2-like"/>
    <property type="match status" value="1"/>
</dbReference>
<dbReference type="Gene3D" id="3.40.50.300">
    <property type="entry name" value="P-loop containing nucleotide triphosphate hydrolases"/>
    <property type="match status" value="1"/>
</dbReference>
<dbReference type="InterPro" id="IPR000367">
    <property type="entry name" value="Gprotein_alpha_S"/>
</dbReference>
<dbReference type="InterPro" id="IPR001019">
    <property type="entry name" value="Gprotein_alpha_su"/>
</dbReference>
<dbReference type="InterPro" id="IPR011025">
    <property type="entry name" value="GproteinA_insert"/>
</dbReference>
<dbReference type="InterPro" id="IPR027417">
    <property type="entry name" value="P-loop_NTPase"/>
</dbReference>
<dbReference type="PANTHER" id="PTHR10218">
    <property type="entry name" value="GTP-BINDING PROTEIN ALPHA SUBUNIT"/>
    <property type="match status" value="1"/>
</dbReference>
<dbReference type="PANTHER" id="PTHR10218:SF357">
    <property type="entry name" value="GUANINE NUCLEOTIDE-BINDING PROTEIN G(S) SUBUNIT ALPHA"/>
    <property type="match status" value="1"/>
</dbReference>
<dbReference type="Pfam" id="PF00503">
    <property type="entry name" value="G-alpha"/>
    <property type="match status" value="1"/>
</dbReference>
<dbReference type="PRINTS" id="PR00318">
    <property type="entry name" value="GPROTEINA"/>
</dbReference>
<dbReference type="PRINTS" id="PR00443">
    <property type="entry name" value="GPROTEINAS"/>
</dbReference>
<dbReference type="SMART" id="SM00275">
    <property type="entry name" value="G_alpha"/>
    <property type="match status" value="1"/>
</dbReference>
<dbReference type="SUPFAM" id="SSF52540">
    <property type="entry name" value="P-loop containing nucleoside triphosphate hydrolases"/>
    <property type="match status" value="1"/>
</dbReference>
<dbReference type="SUPFAM" id="SSF47895">
    <property type="entry name" value="Transducin (alpha subunit), insertion domain"/>
    <property type="match status" value="1"/>
</dbReference>
<dbReference type="PROSITE" id="PS51882">
    <property type="entry name" value="G_ALPHA"/>
    <property type="match status" value="1"/>
</dbReference>
<reference key="1">
    <citation type="journal article" date="1986" name="Proc. Natl. Acad. Sci. U.S.A.">
        <title>Molecular cloning and sequence determination of cDNAs for alpha subunits of the guanine nucleotide-binding proteins Gs, Gi, and Go from rat brain.</title>
        <authorList>
            <person name="Itoh H."/>
            <person name="Kozasa T."/>
            <person name="Nagata S."/>
            <person name="Nakamura S."/>
            <person name="Katada T."/>
            <person name="Ui M."/>
            <person name="Iwai S."/>
            <person name="Ohtsuka E."/>
            <person name="Kawasaki H."/>
            <person name="Suzuki K."/>
            <person name="Kaziro Y."/>
        </authorList>
    </citation>
    <scope>NUCLEOTIDE SEQUENCE [MRNA] (ISOFORM GNAS-1)</scope>
</reference>
<reference key="2">
    <citation type="journal article" date="1987" name="J. Biol. Chem.">
        <title>Molecular cloning of five GTP-binding protein cDNA species from rat olfactory neuroepithelium.</title>
        <authorList>
            <person name="Jones D.T."/>
            <person name="Reed R.R."/>
        </authorList>
    </citation>
    <scope>NUCLEOTIDE SEQUENCE [MRNA] (ISOFORM GNAS-1)</scope>
</reference>
<reference key="3">
    <citation type="journal article" date="1993" name="J. Biol. Chem.">
        <title>Neural expression of a novel alternatively spliced and polyadenylated Gsa alpha transcript.</title>
        <authorList>
            <person name="Crawford J.A."/>
            <person name="Mutchler K.J."/>
            <person name="Sullivan B.E."/>
            <person name="Lanigan T.M."/>
            <person name="Clark M.S."/>
            <person name="Russo A.F."/>
        </authorList>
    </citation>
    <scope>NUCLEOTIDE SEQUENCE [MRNA] (ISOFORM GNAS-3)</scope>
    <scope>TISSUE SPECIFICITY</scope>
    <source>
        <tissue>Thyroid</tissue>
    </source>
</reference>
<reference key="4">
    <citation type="submission" date="1998-11" db="EMBL/GenBank/DDBJ databases">
        <title>Molecular characterization of XL2, a neuroendocrine-specific luminal Golgi-resident protein.</title>
        <authorList>
            <person name="Wang Y.Z."/>
            <person name="Kehlenbach R.H."/>
            <person name="Huttner W.B."/>
        </authorList>
    </citation>
    <scope>NUCLEOTIDE SEQUENCE [MRNA] (ISOFORM GNAS-2)</scope>
    <source>
        <strain>New England Deaconess Hospital</strain>
    </source>
</reference>
<reference key="5">
    <citation type="submission" date="2005-07" db="EMBL/GenBank/DDBJ databases">
        <title>Genetic similarity between spontaneously hypertensive rats and Wistar-Kyoto rats in the coding regions of signal transduction proteins.</title>
        <authorList>
            <person name="Jackson E.K."/>
            <person name="Zhu C."/>
        </authorList>
    </citation>
    <scope>NUCLEOTIDE SEQUENCE [MRNA] (ISOFORM GNAS-1)</scope>
    <source>
        <strain>SHR</strain>
        <strain>Wistar Kyoto</strain>
    </source>
</reference>
<reference key="6">
    <citation type="journal article" date="2004" name="Genome Res.">
        <title>The status, quality, and expansion of the NIH full-length cDNA project: the Mammalian Gene Collection (MGC).</title>
        <authorList>
            <consortium name="The MGC Project Team"/>
        </authorList>
    </citation>
    <scope>NUCLEOTIDE SEQUENCE [LARGE SCALE MRNA] (ISOFORM GNAS-1)</scope>
    <source>
        <tissue>Prostate</tissue>
    </source>
</reference>
<reference key="7">
    <citation type="journal article" date="2012" name="Nat. Commun.">
        <title>Quantitative maps of protein phosphorylation sites across 14 different rat organs and tissues.</title>
        <authorList>
            <person name="Lundby A."/>
            <person name="Secher A."/>
            <person name="Lage K."/>
            <person name="Nordsborg N.B."/>
            <person name="Dmytriyev A."/>
            <person name="Lundby C."/>
            <person name="Olsen J.V."/>
        </authorList>
    </citation>
    <scope>PHOSPHORYLATION [LARGE SCALE ANALYSIS] AT SER-352</scope>
    <scope>IDENTIFICATION BY MASS SPECTROMETRY [LARGE SCALE ANALYSIS]</scope>
</reference>
<reference key="8">
    <citation type="journal article" date="1995" name="J. Mol. Biol.">
        <title>Solution structure of the GTPase activating domain of alpha s.</title>
        <authorList>
            <person name="Benjamin D.R."/>
            <person name="Markby D.W."/>
            <person name="Bourne H.R."/>
            <person name="Kuntz I.D."/>
        </authorList>
    </citation>
    <scope>STRUCTURE BY NMR OF 81-209</scope>
</reference>
<reference key="9">
    <citation type="journal article" date="1993" name="Biochemistry">
        <title>The G protein alpha s subunit incorporates [3H]palmitic acid and mutation of cysteine-3 prevents this modification.</title>
        <authorList>
            <person name="Degtyarev M.Y."/>
            <person name="Spiegel A.M."/>
            <person name="Jones T.L.Z."/>
        </authorList>
    </citation>
    <scope>PALMITOYLATION AT CYS-3</scope>
    <scope>MUTAGENESIS OF CYS-3</scope>
</reference>
<reference evidence="12" key="10">
    <citation type="journal article" date="2024" name="Nat. Commun.">
        <title>Molecular basis of human trace amine-associated receptor 1 activation.</title>
        <authorList>
            <person name="Zilberg G."/>
            <person name="Parpounas A.K."/>
            <person name="Warren A.L."/>
            <person name="Yang S."/>
            <person name="Wacker D."/>
        </authorList>
    </citation>
    <scope>STRUCTURE BY ELECTRON MICROSCOPY (3.35 ANGSTROMS) IN COMPLEX WITH TAAR1; GNB1 AND GNG2; WITHIN THE COMPLEX INTERACTS WITH TAS2R14; THIS COMPLEX PLAYS A ROLE IN THE PERCEPTION OF BITTERNESS</scope>
    <scope>SUBUNIT</scope>
</reference>
<accession>P63095</accession>
<accession>P04894</accession>
<accession>P08755</accession>
<accession>Q05087</accession>
<accession>Q45QM7</accession>
<accession>Q9Z1R8</accession>
<protein>
    <recommendedName>
        <fullName>Guanine nucleotide-binding protein G(s) subunit alpha isoforms short</fullName>
        <ecNumber evidence="2">3.6.5.-</ecNumber>
    </recommendedName>
    <alternativeName>
        <fullName>Adenylate cyclase-stimulating G alpha protein</fullName>
    </alternativeName>
    <alternativeName>
        <fullName>G-alpha-8</fullName>
    </alternativeName>
</protein>
<proteinExistence type="evidence at protein level"/>
<organism>
    <name type="scientific">Rattus norvegicus</name>
    <name type="common">Rat</name>
    <dbReference type="NCBI Taxonomy" id="10116"/>
    <lineage>
        <taxon>Eukaryota</taxon>
        <taxon>Metazoa</taxon>
        <taxon>Chordata</taxon>
        <taxon>Craniata</taxon>
        <taxon>Vertebrata</taxon>
        <taxon>Euteleostomi</taxon>
        <taxon>Mammalia</taxon>
        <taxon>Eutheria</taxon>
        <taxon>Euarchontoglires</taxon>
        <taxon>Glires</taxon>
        <taxon>Rodentia</taxon>
        <taxon>Myomorpha</taxon>
        <taxon>Muroidea</taxon>
        <taxon>Muridae</taxon>
        <taxon>Murinae</taxon>
        <taxon>Rattus</taxon>
    </lineage>
</organism>
<sequence>MGCLGNSKTEDQRNEEKAQREANKKIEKQLQKDKQVYRATHRLLLLGAGESGKSTIVKQMRILHVNGFNGEGGEEDPQAARSNSDGEKATKVQDIKNNLKEAIETIVAAMSNLVPPVELANPENQFRVDYILSVMNVPNFDFPPEFYEHAKALWEDEGVRACYERSNEYQLIDCAQYFLDKIDVIKQADYVPSDQDLLRCRVLTSGIFETKFQVDKVNFHMFDVGGQRDERRKWIQCFNDVTAIIFVVASSSYNMVIREDNQTNRLQEALNLFKSIWNNRWLRTISVILFLNKQDLLAEKVLAGKSKIEDYFPEFARYTTPEDATPEPGEDPRVTRAKYFIRDEFLRISTASGDGRHYCYPHFTCAVDTENIRRVFNDCRDIIQRMHLRQYELL</sequence>